<proteinExistence type="inferred from homology"/>
<gene>
    <name type="ordered locus">BcerKBAB4_1085</name>
</gene>
<organism>
    <name type="scientific">Bacillus mycoides (strain KBAB4)</name>
    <name type="common">Bacillus weihenstephanensis</name>
    <dbReference type="NCBI Taxonomy" id="315730"/>
    <lineage>
        <taxon>Bacteria</taxon>
        <taxon>Bacillati</taxon>
        <taxon>Bacillota</taxon>
        <taxon>Bacilli</taxon>
        <taxon>Bacillales</taxon>
        <taxon>Bacillaceae</taxon>
        <taxon>Bacillus</taxon>
        <taxon>Bacillus cereus group</taxon>
    </lineage>
</organism>
<comment type="similarity">
    <text evidence="1">Belongs to the UPF0736 family.</text>
</comment>
<dbReference type="EMBL" id="CP000903">
    <property type="protein sequence ID" value="ABY42334.1"/>
    <property type="molecule type" value="Genomic_DNA"/>
</dbReference>
<dbReference type="RefSeq" id="WP_002030367.1">
    <property type="nucleotide sequence ID" value="NZ_CAKMRX030000133.1"/>
</dbReference>
<dbReference type="SMR" id="A9VJ45"/>
<dbReference type="KEGG" id="bwe:BcerKBAB4_1085"/>
<dbReference type="eggNOG" id="ENOG502Z8PJ">
    <property type="taxonomic scope" value="Bacteria"/>
</dbReference>
<dbReference type="HOGENOM" id="CLU_1101152_0_0_9"/>
<dbReference type="Proteomes" id="UP000002154">
    <property type="component" value="Chromosome"/>
</dbReference>
<dbReference type="HAMAP" id="MF_01860">
    <property type="entry name" value="UPF0736"/>
    <property type="match status" value="1"/>
</dbReference>
<dbReference type="InterPro" id="IPR020909">
    <property type="entry name" value="UPF0736"/>
</dbReference>
<dbReference type="Pfam" id="PF12227">
    <property type="entry name" value="DUF3603"/>
    <property type="match status" value="1"/>
</dbReference>
<evidence type="ECO:0000255" key="1">
    <source>
        <dbReference type="HAMAP-Rule" id="MF_01860"/>
    </source>
</evidence>
<accession>A9VJ45</accession>
<name>Y1085_BACMK</name>
<protein>
    <recommendedName>
        <fullName evidence="1">UPF0736 protein BcerKBAB4_1085</fullName>
    </recommendedName>
</protein>
<reference key="1">
    <citation type="journal article" date="2008" name="Chem. Biol. Interact.">
        <title>Extending the Bacillus cereus group genomics to putative food-borne pathogens of different toxicity.</title>
        <authorList>
            <person name="Lapidus A."/>
            <person name="Goltsman E."/>
            <person name="Auger S."/>
            <person name="Galleron N."/>
            <person name="Segurens B."/>
            <person name="Dossat C."/>
            <person name="Land M.L."/>
            <person name="Broussolle V."/>
            <person name="Brillard J."/>
            <person name="Guinebretiere M.-H."/>
            <person name="Sanchis V."/>
            <person name="Nguen-the C."/>
            <person name="Lereclus D."/>
            <person name="Richardson P."/>
            <person name="Wincker P."/>
            <person name="Weissenbach J."/>
            <person name="Ehrlich S.D."/>
            <person name="Sorokin A."/>
        </authorList>
    </citation>
    <scope>NUCLEOTIDE SEQUENCE [LARGE SCALE GENOMIC DNA]</scope>
    <source>
        <strain>KBAB4</strain>
    </source>
</reference>
<sequence>MLYLHDVWVNWFEGEENGYNVCHFYEWRKDDTIELLDQVPLLKVDATLYHYIENELLELPQKLLEDVYHKAYIRKNHERLQQEYCFVVTDGKGIIAIDSIGYNVPIRKSRLIPRQEQMVYEMVENVQAEKYEFQVEEIEKEHHILSPSPFIMNGLTRKERQLKQLLFMALDQLHTTKNPAEIRYWFTEWDPSAYGMVQHMEFEDVWAKLYDEAKTGWSEKHEQLCERLVKGQPFFEKLWEMENEQKVN</sequence>
<feature type="chain" id="PRO_0000369150" description="UPF0736 protein BcerKBAB4_1085">
    <location>
        <begin position="1"/>
        <end position="248"/>
    </location>
</feature>